<feature type="chain" id="PRO_0000328223" description="Natural resistance-associated macrophage protein 2 homolog">
    <location>
        <begin position="1"/>
        <end position="629"/>
    </location>
</feature>
<feature type="topological domain" description="Cytoplasmic" evidence="2">
    <location>
        <begin position="1"/>
        <end position="151"/>
    </location>
</feature>
<feature type="transmembrane region" description="Helical" evidence="2">
    <location>
        <begin position="152"/>
        <end position="172"/>
    </location>
</feature>
<feature type="topological domain" description="Extracellular" evidence="2">
    <location>
        <begin position="173"/>
        <end position="182"/>
    </location>
</feature>
<feature type="transmembrane region" description="Helical" evidence="2">
    <location>
        <begin position="183"/>
        <end position="203"/>
    </location>
</feature>
<feature type="topological domain" description="Cytoplasmic" evidence="2">
    <location>
        <begin position="204"/>
        <end position="224"/>
    </location>
</feature>
<feature type="transmembrane region" description="Helical" evidence="2">
    <location>
        <begin position="225"/>
        <end position="245"/>
    </location>
</feature>
<feature type="topological domain" description="Extracellular" evidence="2">
    <location>
        <begin position="246"/>
        <end position="253"/>
    </location>
</feature>
<feature type="transmembrane region" description="Helical" evidence="2">
    <location>
        <begin position="254"/>
        <end position="274"/>
    </location>
</feature>
<feature type="topological domain" description="Cytoplasmic" evidence="2">
    <location>
        <begin position="275"/>
        <end position="286"/>
    </location>
</feature>
<feature type="transmembrane region" description="Helical" evidence="2">
    <location>
        <begin position="287"/>
        <end position="307"/>
    </location>
</feature>
<feature type="topological domain" description="Extracellular" evidence="2">
    <location>
        <begin position="308"/>
        <end position="326"/>
    </location>
</feature>
<feature type="transmembrane region" description="Helical" evidence="2">
    <location>
        <begin position="327"/>
        <end position="347"/>
    </location>
</feature>
<feature type="topological domain" description="Cytoplasmic" evidence="2">
    <location>
        <begin position="348"/>
        <end position="376"/>
    </location>
</feature>
<feature type="transmembrane region" description="Helical" evidence="2">
    <location>
        <begin position="377"/>
        <end position="397"/>
    </location>
</feature>
<feature type="topological domain" description="Extracellular" evidence="2">
    <location>
        <begin position="398"/>
        <end position="421"/>
    </location>
</feature>
<feature type="transmembrane region" description="Helical" evidence="2">
    <location>
        <begin position="422"/>
        <end position="442"/>
    </location>
</feature>
<feature type="topological domain" description="Cytoplasmic" evidence="2">
    <location>
        <begin position="443"/>
        <end position="468"/>
    </location>
</feature>
<feature type="transmembrane region" description="Helical" evidence="2">
    <location>
        <begin position="469"/>
        <end position="489"/>
    </location>
</feature>
<feature type="topological domain" description="Extracellular" evidence="2">
    <location>
        <begin position="490"/>
        <end position="491"/>
    </location>
</feature>
<feature type="transmembrane region" description="Helical" evidence="2">
    <location>
        <begin position="492"/>
        <end position="512"/>
    </location>
</feature>
<feature type="topological domain" description="Cytoplasmic" evidence="2">
    <location>
        <begin position="513"/>
        <end position="527"/>
    </location>
</feature>
<feature type="transmembrane region" description="Helical" evidence="2">
    <location>
        <begin position="528"/>
        <end position="548"/>
    </location>
</feature>
<feature type="topological domain" description="Extracellular" evidence="2">
    <location>
        <begin position="549"/>
        <end position="565"/>
    </location>
</feature>
<feature type="transmembrane region" description="Helical" evidence="2">
    <location>
        <begin position="566"/>
        <end position="586"/>
    </location>
</feature>
<feature type="topological domain" description="Cytoplasmic" evidence="2">
    <location>
        <begin position="587"/>
        <end position="629"/>
    </location>
</feature>
<feature type="region of interest" description="Disordered" evidence="3">
    <location>
        <begin position="50"/>
        <end position="119"/>
    </location>
</feature>
<feature type="compositionally biased region" description="Low complexity" evidence="3">
    <location>
        <begin position="62"/>
        <end position="85"/>
    </location>
</feature>
<feature type="compositionally biased region" description="Basic and acidic residues" evidence="3">
    <location>
        <begin position="96"/>
        <end position="105"/>
    </location>
</feature>
<feature type="compositionally biased region" description="Low complexity" evidence="3">
    <location>
        <begin position="106"/>
        <end position="118"/>
    </location>
</feature>
<feature type="glycosylation site" description="N-linked (GlcNAc...) asparagine" evidence="2">
    <location>
        <position position="557"/>
    </location>
</feature>
<reference key="1">
    <citation type="journal article" date="2002" name="Nature">
        <title>Sequence and analysis of chromosome 2 of Dictyostelium discoideum.</title>
        <authorList>
            <person name="Gloeckner G."/>
            <person name="Eichinger L."/>
            <person name="Szafranski K."/>
            <person name="Pachebat J.A."/>
            <person name="Bankier A.T."/>
            <person name="Dear P.H."/>
            <person name="Lehmann R."/>
            <person name="Baumgart C."/>
            <person name="Parra G."/>
            <person name="Abril J.F."/>
            <person name="Guigo R."/>
            <person name="Kumpf K."/>
            <person name="Tunggal B."/>
            <person name="Cox E.C."/>
            <person name="Quail M.A."/>
            <person name="Platzer M."/>
            <person name="Rosenthal A."/>
            <person name="Noegel A.A."/>
        </authorList>
    </citation>
    <scope>NUCLEOTIDE SEQUENCE [LARGE SCALE GENOMIC DNA]</scope>
    <source>
        <strain>AX4</strain>
    </source>
</reference>
<reference key="2">
    <citation type="journal article" date="2005" name="Nature">
        <title>The genome of the social amoeba Dictyostelium discoideum.</title>
        <authorList>
            <person name="Eichinger L."/>
            <person name="Pachebat J.A."/>
            <person name="Gloeckner G."/>
            <person name="Rajandream M.A."/>
            <person name="Sucgang R."/>
            <person name="Berriman M."/>
            <person name="Song J."/>
            <person name="Olsen R."/>
            <person name="Szafranski K."/>
            <person name="Xu Q."/>
            <person name="Tunggal B."/>
            <person name="Kummerfeld S."/>
            <person name="Madera M."/>
            <person name="Konfortov B.A."/>
            <person name="Rivero F."/>
            <person name="Bankier A.T."/>
            <person name="Lehmann R."/>
            <person name="Hamlin N."/>
            <person name="Davies R."/>
            <person name="Gaudet P."/>
            <person name="Fey P."/>
            <person name="Pilcher K."/>
            <person name="Chen G."/>
            <person name="Saunders D."/>
            <person name="Sodergren E.J."/>
            <person name="Davis P."/>
            <person name="Kerhornou A."/>
            <person name="Nie X."/>
            <person name="Hall N."/>
            <person name="Anjard C."/>
            <person name="Hemphill L."/>
            <person name="Bason N."/>
            <person name="Farbrother P."/>
            <person name="Desany B."/>
            <person name="Just E."/>
            <person name="Morio T."/>
            <person name="Rost R."/>
            <person name="Churcher C.M."/>
            <person name="Cooper J."/>
            <person name="Haydock S."/>
            <person name="van Driessche N."/>
            <person name="Cronin A."/>
            <person name="Goodhead I."/>
            <person name="Muzny D.M."/>
            <person name="Mourier T."/>
            <person name="Pain A."/>
            <person name="Lu M."/>
            <person name="Harper D."/>
            <person name="Lindsay R."/>
            <person name="Hauser H."/>
            <person name="James K.D."/>
            <person name="Quiles M."/>
            <person name="Madan Babu M."/>
            <person name="Saito T."/>
            <person name="Buchrieser C."/>
            <person name="Wardroper A."/>
            <person name="Felder M."/>
            <person name="Thangavelu M."/>
            <person name="Johnson D."/>
            <person name="Knights A."/>
            <person name="Loulseged H."/>
            <person name="Mungall K.L."/>
            <person name="Oliver K."/>
            <person name="Price C."/>
            <person name="Quail M.A."/>
            <person name="Urushihara H."/>
            <person name="Hernandez J."/>
            <person name="Rabbinowitsch E."/>
            <person name="Steffen D."/>
            <person name="Sanders M."/>
            <person name="Ma J."/>
            <person name="Kohara Y."/>
            <person name="Sharp S."/>
            <person name="Simmonds M.N."/>
            <person name="Spiegler S."/>
            <person name="Tivey A."/>
            <person name="Sugano S."/>
            <person name="White B."/>
            <person name="Walker D."/>
            <person name="Woodward J.R."/>
            <person name="Winckler T."/>
            <person name="Tanaka Y."/>
            <person name="Shaulsky G."/>
            <person name="Schleicher M."/>
            <person name="Weinstock G.M."/>
            <person name="Rosenthal A."/>
            <person name="Cox E.C."/>
            <person name="Chisholm R.L."/>
            <person name="Gibbs R.A."/>
            <person name="Loomis W.F."/>
            <person name="Platzer M."/>
            <person name="Kay R.R."/>
            <person name="Williams J.G."/>
            <person name="Dear P.H."/>
            <person name="Noegel A.A."/>
            <person name="Barrell B.G."/>
            <person name="Kuspa A."/>
        </authorList>
    </citation>
    <scope>NUCLEOTIDE SEQUENCE [LARGE SCALE GENOMIC DNA]</scope>
    <source>
        <strain>AX4</strain>
    </source>
</reference>
<name>NRAM2_DICDI</name>
<gene>
    <name type="primary">nramp2</name>
    <name type="synonym">mntH</name>
    <name type="ORF">DDB_G0275815</name>
</gene>
<evidence type="ECO:0000250" key="1"/>
<evidence type="ECO:0000255" key="2"/>
<evidence type="ECO:0000256" key="3">
    <source>
        <dbReference type="SAM" id="MobiDB-lite"/>
    </source>
</evidence>
<evidence type="ECO:0000305" key="4"/>
<sequence length="629" mass="70404">MNNNNNNKKLNKENLNEIENWNEIELTDYKKQGLDEGTSSNIYLFESNGNVVNGSIEDSPKQQQQQQQQQQQQQQQQQQQQQQQQNIISSDEEIEDKPFQDRDSNIGDGSDIDSSGDSIDIENTDYSILVPFEDEENNNGSKSKFSIKKLKSFLGPALFISVGYMDPGNWATDLEGGSRFGYQLMWVLLFSNIMALFLQTLVIKLALVTKNDLAQQCRKEYSKTVNIFLWLILELAIISTDLAEVIGTAIGLNILFGLPLIAGVAITSLDTLLFLAIQRWGIRKLELLILLLLSMITMCFVIELFLSKPIASEVFSGFVPRLNSDSVMVATGIVGATTMPHNLFLHGSVVKSRKIPNDRRKSVIKQAYRYNVIDTVLALNCAFFVNIAILMLAASVFWKSNIQVTELSEAYRLLTKLMDGKLAAVLFGLGLFLAGQSSTITGTMAGQIVMEGFIKLRIKPWLRRFITRLLAIIPAAIVIIVLGDKGTYTLLIISQVLLSIGLPFAVVPLIIFTSSYEIMGEFKNRLSIIIINSIIALFIIGLNLATIFQLINDFLHNDSIISKCLTIIFLIPLSIALCCLLLWLIISKINFFTNLLSKIFNNNNNNNNKNIINNNNNYSGNTINNQTIQ</sequence>
<comment type="function">
    <text evidence="1">Divalent transition metal (iron and manganese) transporter.</text>
</comment>
<comment type="subcellular location">
    <subcellularLocation>
        <location evidence="4">Cell membrane</location>
        <topology evidence="4">Multi-pass membrane protein</topology>
    </subcellularLocation>
</comment>
<comment type="similarity">
    <text evidence="4">Belongs to the NRAMP family.</text>
</comment>
<organism>
    <name type="scientific">Dictyostelium discoideum</name>
    <name type="common">Social amoeba</name>
    <dbReference type="NCBI Taxonomy" id="44689"/>
    <lineage>
        <taxon>Eukaryota</taxon>
        <taxon>Amoebozoa</taxon>
        <taxon>Evosea</taxon>
        <taxon>Eumycetozoa</taxon>
        <taxon>Dictyostelia</taxon>
        <taxon>Dictyosteliales</taxon>
        <taxon>Dictyosteliaceae</taxon>
        <taxon>Dictyostelium</taxon>
    </lineage>
</organism>
<protein>
    <recommendedName>
        <fullName>Natural resistance-associated macrophage protein 2 homolog</fullName>
    </recommendedName>
</protein>
<dbReference type="EMBL" id="AAFI02000013">
    <property type="protein sequence ID" value="EAL69658.1"/>
    <property type="molecule type" value="Genomic_DNA"/>
</dbReference>
<dbReference type="RefSeq" id="XP_643409.1">
    <property type="nucleotide sequence ID" value="XM_638317.1"/>
</dbReference>
<dbReference type="SMR" id="Q553K4"/>
<dbReference type="FunCoup" id="Q553K4">
    <property type="interactions" value="3"/>
</dbReference>
<dbReference type="STRING" id="44689.Q553K4"/>
<dbReference type="TCDB" id="2.A.55.2.10">
    <property type="family name" value="the metal ion (mn(2+)-iron) transporter (nramp) family"/>
</dbReference>
<dbReference type="GlyCosmos" id="Q553K4">
    <property type="glycosylation" value="1 site, No reported glycans"/>
</dbReference>
<dbReference type="GlyGen" id="Q553K4">
    <property type="glycosylation" value="1 site"/>
</dbReference>
<dbReference type="PaxDb" id="44689-DDB0232114"/>
<dbReference type="EnsemblProtists" id="EAL69658">
    <property type="protein sequence ID" value="EAL69658"/>
    <property type="gene ID" value="DDB_G0275815"/>
</dbReference>
<dbReference type="GeneID" id="8619995"/>
<dbReference type="KEGG" id="ddi:DDB_G0275815"/>
<dbReference type="dictyBase" id="DDB_G0275815">
    <property type="gene designation" value="nrampB"/>
</dbReference>
<dbReference type="VEuPathDB" id="AmoebaDB:DDB_G0275815"/>
<dbReference type="eggNOG" id="KOG1291">
    <property type="taxonomic scope" value="Eukaryota"/>
</dbReference>
<dbReference type="HOGENOM" id="CLU_020088_0_1_1"/>
<dbReference type="InParanoid" id="Q553K4"/>
<dbReference type="OMA" id="PHTIYLG"/>
<dbReference type="PhylomeDB" id="Q553K4"/>
<dbReference type="PRO" id="PR:Q553K4"/>
<dbReference type="Proteomes" id="UP000002195">
    <property type="component" value="Chromosome 2"/>
</dbReference>
<dbReference type="GO" id="GO:0031164">
    <property type="term" value="C:contractile vacuolar membrane"/>
    <property type="evidence" value="ECO:0000314"/>
    <property type="project" value="dictyBase"/>
</dbReference>
<dbReference type="GO" id="GO:0005886">
    <property type="term" value="C:plasma membrane"/>
    <property type="evidence" value="ECO:0000318"/>
    <property type="project" value="GO_Central"/>
</dbReference>
<dbReference type="GO" id="GO:0015086">
    <property type="term" value="F:cadmium ion transmembrane transporter activity"/>
    <property type="evidence" value="ECO:0000318"/>
    <property type="project" value="GO_Central"/>
</dbReference>
<dbReference type="GO" id="GO:0015093">
    <property type="term" value="F:ferrous iron transmembrane transporter activity"/>
    <property type="evidence" value="ECO:0000314"/>
    <property type="project" value="dictyBase"/>
</dbReference>
<dbReference type="GO" id="GO:0005384">
    <property type="term" value="F:manganese ion transmembrane transporter activity"/>
    <property type="evidence" value="ECO:0000318"/>
    <property type="project" value="GO_Central"/>
</dbReference>
<dbReference type="GO" id="GO:0015293">
    <property type="term" value="F:symporter activity"/>
    <property type="evidence" value="ECO:0007669"/>
    <property type="project" value="UniProtKB-KW"/>
</dbReference>
<dbReference type="GO" id="GO:0031152">
    <property type="term" value="P:aggregation involved in sorocarp development"/>
    <property type="evidence" value="ECO:0000315"/>
    <property type="project" value="dictyBase"/>
</dbReference>
<dbReference type="GO" id="GO:0042742">
    <property type="term" value="P:defense response to bacterium"/>
    <property type="evidence" value="ECO:0000315"/>
    <property type="project" value="dictyBase"/>
</dbReference>
<dbReference type="GO" id="GO:0006879">
    <property type="term" value="P:intracellular iron ion homeostasis"/>
    <property type="evidence" value="ECO:0000315"/>
    <property type="project" value="dictyBase"/>
</dbReference>
<dbReference type="GO" id="GO:0030026">
    <property type="term" value="P:intracellular manganese ion homeostasis"/>
    <property type="evidence" value="ECO:0000318"/>
    <property type="project" value="GO_Central"/>
</dbReference>
<dbReference type="GO" id="GO:1903988">
    <property type="term" value="P:iron ion export across plasma membrane"/>
    <property type="evidence" value="ECO:0000314"/>
    <property type="project" value="dictyBase"/>
</dbReference>
<dbReference type="GO" id="GO:0034755">
    <property type="term" value="P:iron ion transmembrane transport"/>
    <property type="evidence" value="ECO:0000318"/>
    <property type="project" value="GO_Central"/>
</dbReference>
<dbReference type="GO" id="GO:0006828">
    <property type="term" value="P:manganese ion transport"/>
    <property type="evidence" value="ECO:0000318"/>
    <property type="project" value="GO_Central"/>
</dbReference>
<dbReference type="GO" id="GO:0009617">
    <property type="term" value="P:response to bacterium"/>
    <property type="evidence" value="ECO:0000314"/>
    <property type="project" value="dictyBase"/>
</dbReference>
<dbReference type="HAMAP" id="MF_00221">
    <property type="entry name" value="NRAMP"/>
    <property type="match status" value="1"/>
</dbReference>
<dbReference type="InterPro" id="IPR001046">
    <property type="entry name" value="NRAMP_fam"/>
</dbReference>
<dbReference type="NCBIfam" id="TIGR01197">
    <property type="entry name" value="nramp"/>
    <property type="match status" value="1"/>
</dbReference>
<dbReference type="NCBIfam" id="NF037982">
    <property type="entry name" value="Nramp_1"/>
    <property type="match status" value="1"/>
</dbReference>
<dbReference type="NCBIfam" id="NF001923">
    <property type="entry name" value="PRK00701.1"/>
    <property type="match status" value="1"/>
</dbReference>
<dbReference type="PANTHER" id="PTHR11706:SF101">
    <property type="entry name" value="MANGANESE TRANSPORTER SMF1"/>
    <property type="match status" value="1"/>
</dbReference>
<dbReference type="PANTHER" id="PTHR11706">
    <property type="entry name" value="SOLUTE CARRIER PROTEIN FAMILY 11 MEMBER"/>
    <property type="match status" value="1"/>
</dbReference>
<dbReference type="Pfam" id="PF01566">
    <property type="entry name" value="Nramp"/>
    <property type="match status" value="1"/>
</dbReference>
<dbReference type="PRINTS" id="PR00447">
    <property type="entry name" value="NATRESASSCMP"/>
</dbReference>
<keyword id="KW-1003">Cell membrane</keyword>
<keyword id="KW-0325">Glycoprotein</keyword>
<keyword id="KW-0464">Manganese</keyword>
<keyword id="KW-0472">Membrane</keyword>
<keyword id="KW-1185">Reference proteome</keyword>
<keyword id="KW-0769">Symport</keyword>
<keyword id="KW-0812">Transmembrane</keyword>
<keyword id="KW-1133">Transmembrane helix</keyword>
<keyword id="KW-0813">Transport</keyword>
<proteinExistence type="inferred from homology"/>
<accession>Q553K4</accession>
<accession>Q86H95</accession>